<gene>
    <name evidence="6" type="primary">kk1H</name>
    <name evidence="5" type="synonym">TR07</name>
    <name type="ORF">TRAF135007</name>
</gene>
<dbReference type="EC" id="1.1.1.-" evidence="8"/>
<dbReference type="EMBL" id="LC371755">
    <property type="protein sequence ID" value="BBC83963.1"/>
    <property type="molecule type" value="Genomic_DNA"/>
</dbReference>
<dbReference type="SMR" id="A0A348AXY0"/>
<dbReference type="VEuPathDB" id="FungiDB:yc1106_02254"/>
<dbReference type="GO" id="GO:0008720">
    <property type="term" value="F:D-lactate dehydrogenase activity"/>
    <property type="evidence" value="ECO:0007669"/>
    <property type="project" value="TreeGrafter"/>
</dbReference>
<dbReference type="GO" id="GO:0051287">
    <property type="term" value="F:NAD binding"/>
    <property type="evidence" value="ECO:0007669"/>
    <property type="project" value="InterPro"/>
</dbReference>
<dbReference type="GO" id="GO:0017000">
    <property type="term" value="P:antibiotic biosynthetic process"/>
    <property type="evidence" value="ECO:0007669"/>
    <property type="project" value="UniProtKB-KW"/>
</dbReference>
<dbReference type="CDD" id="cd12183">
    <property type="entry name" value="LDH_like_2"/>
    <property type="match status" value="1"/>
</dbReference>
<dbReference type="Gene3D" id="3.40.50.720">
    <property type="entry name" value="NAD(P)-binding Rossmann-like Domain"/>
    <property type="match status" value="2"/>
</dbReference>
<dbReference type="InterPro" id="IPR006139">
    <property type="entry name" value="D-isomer_2_OHA_DH_cat_dom"/>
</dbReference>
<dbReference type="InterPro" id="IPR029753">
    <property type="entry name" value="D-isomer_DH_CS"/>
</dbReference>
<dbReference type="InterPro" id="IPR029752">
    <property type="entry name" value="D-isomer_DH_CS1"/>
</dbReference>
<dbReference type="InterPro" id="IPR006140">
    <property type="entry name" value="D-isomer_DH_NAD-bd"/>
</dbReference>
<dbReference type="InterPro" id="IPR036291">
    <property type="entry name" value="NAD(P)-bd_dom_sf"/>
</dbReference>
<dbReference type="PANTHER" id="PTHR43026">
    <property type="entry name" value="2-HYDROXYACID DEHYDROGENASE HOMOLOG 1-RELATED"/>
    <property type="match status" value="1"/>
</dbReference>
<dbReference type="PANTHER" id="PTHR43026:SF1">
    <property type="entry name" value="2-HYDROXYACID DEHYDROGENASE HOMOLOG 1-RELATED"/>
    <property type="match status" value="1"/>
</dbReference>
<dbReference type="Pfam" id="PF00389">
    <property type="entry name" value="2-Hacid_dh"/>
    <property type="match status" value="1"/>
</dbReference>
<dbReference type="Pfam" id="PF02826">
    <property type="entry name" value="2-Hacid_dh_C"/>
    <property type="match status" value="1"/>
</dbReference>
<dbReference type="SUPFAM" id="SSF52283">
    <property type="entry name" value="Formate/glycerate dehydrogenase catalytic domain-like"/>
    <property type="match status" value="1"/>
</dbReference>
<dbReference type="SUPFAM" id="SSF51735">
    <property type="entry name" value="NAD(P)-binding Rossmann-fold domains"/>
    <property type="match status" value="1"/>
</dbReference>
<dbReference type="PROSITE" id="PS00065">
    <property type="entry name" value="D_2_HYDROXYACID_DH_1"/>
    <property type="match status" value="1"/>
</dbReference>
<dbReference type="PROSITE" id="PS00670">
    <property type="entry name" value="D_2_HYDROXYACID_DH_2"/>
    <property type="match status" value="1"/>
</dbReference>
<dbReference type="PROSITE" id="PS00671">
    <property type="entry name" value="D_2_HYDROXYACID_DH_3"/>
    <property type="match status" value="1"/>
</dbReference>
<feature type="chain" id="PRO_0000450436" description="D-lactate dehydrogenase kk1H">
    <location>
        <begin position="1"/>
        <end position="348"/>
    </location>
</feature>
<feature type="active site" evidence="1">
    <location>
        <position position="237"/>
    </location>
</feature>
<feature type="active site" evidence="1">
    <location>
        <position position="266"/>
    </location>
</feature>
<feature type="active site" description="Proton donor" evidence="1">
    <location>
        <position position="298"/>
    </location>
</feature>
<feature type="binding site" evidence="2">
    <location>
        <begin position="158"/>
        <end position="159"/>
    </location>
    <ligand>
        <name>NAD(+)</name>
        <dbReference type="ChEBI" id="CHEBI:57540"/>
    </ligand>
</feature>
<feature type="binding site" evidence="2">
    <location>
        <position position="178"/>
    </location>
    <ligand>
        <name>NAD(+)</name>
        <dbReference type="ChEBI" id="CHEBI:57540"/>
    </ligand>
</feature>
<feature type="binding site" evidence="2">
    <location>
        <begin position="208"/>
        <end position="209"/>
    </location>
    <ligand>
        <name>NAD(+)</name>
        <dbReference type="ChEBI" id="CHEBI:57540"/>
    </ligand>
</feature>
<feature type="binding site" evidence="2">
    <location>
        <begin position="235"/>
        <end position="237"/>
    </location>
    <ligand>
        <name>NAD(+)</name>
        <dbReference type="ChEBI" id="CHEBI:57540"/>
    </ligand>
</feature>
<feature type="binding site" evidence="2">
    <location>
        <position position="261"/>
    </location>
    <ligand>
        <name>NAD(+)</name>
        <dbReference type="ChEBI" id="CHEBI:57540"/>
    </ligand>
</feature>
<organism>
    <name type="scientific">Curvularia clavata</name>
    <dbReference type="NCBI Taxonomy" id="95742"/>
    <lineage>
        <taxon>Eukaryota</taxon>
        <taxon>Fungi</taxon>
        <taxon>Dikarya</taxon>
        <taxon>Ascomycota</taxon>
        <taxon>Pezizomycotina</taxon>
        <taxon>Dothideomycetes</taxon>
        <taxon>Pleosporomycetidae</taxon>
        <taxon>Pleosporales</taxon>
        <taxon>Pleosporineae</taxon>
        <taxon>Pleosporaceae</taxon>
        <taxon>Curvularia</taxon>
    </lineage>
</organism>
<name>KK1H_CURCL</name>
<reference key="1">
    <citation type="journal article" date="2018" name="Front. Microbiol.">
        <title>Heterologous production of a novel cyclic peptide compound, KK-1, in Aspergillus oryzae.</title>
        <authorList>
            <person name="Yoshimi A."/>
            <person name="Yamaguchi S."/>
            <person name="Fujioka T."/>
            <person name="Kawai K."/>
            <person name="Gomi K."/>
            <person name="Machida M."/>
            <person name="Abe K."/>
        </authorList>
    </citation>
    <scope>NUCLEOTIDE SEQUENCE [GENOMIC DNA]</scope>
    <scope>FUNCTION</scope>
    <scope>PATHWAY</scope>
    <source>
        <strain>BAUA-2787</strain>
    </source>
</reference>
<reference key="2">
    <citation type="journal article" date="2022" name="Front. Fungal Biol.">
        <title>Discovery of a gene cluster for the biosynthesis of novel cyclic peptide compound, KK-1, in Curvularia clavata.</title>
        <authorList>
            <person name="Yamaguchi S."/>
            <person name="Fujioka T."/>
            <person name="Yoshimi A."/>
            <person name="Kumagai T."/>
            <person name="Umemura M."/>
            <person name="Abe K."/>
            <person name="Machida M."/>
            <person name="Kawai K."/>
        </authorList>
    </citation>
    <scope>FUNCTION</scope>
    <scope>INDUCTION</scope>
    <scope>DISRUPTION PHENOTYPE</scope>
    <scope>PATHWAY</scope>
</reference>
<proteinExistence type="evidence at transcript level"/>
<evidence type="ECO:0000250" key="1">
    <source>
        <dbReference type="UniProtKB" id="P26297"/>
    </source>
</evidence>
<evidence type="ECO:0000250" key="2">
    <source>
        <dbReference type="UniProtKB" id="P30901"/>
    </source>
</evidence>
<evidence type="ECO:0000269" key="3">
    <source>
    </source>
</evidence>
<evidence type="ECO:0000269" key="4">
    <source>
    </source>
</evidence>
<evidence type="ECO:0000303" key="5">
    <source>
    </source>
</evidence>
<evidence type="ECO:0000303" key="6">
    <source>
    </source>
</evidence>
<evidence type="ECO:0000305" key="7"/>
<evidence type="ECO:0000305" key="8">
    <source>
    </source>
</evidence>
<protein>
    <recommendedName>
        <fullName evidence="6">D-lactate dehydrogenase kk1H</fullName>
        <ecNumber evidence="8">1.1.1.-</ecNumber>
    </recommendedName>
    <alternativeName>
        <fullName evidence="6">KK-1 biosynthesis cluster protein H</fullName>
    </alternativeName>
</protein>
<accession>A0A348AXY0</accession>
<comment type="function">
    <text evidence="3 4 8">D-lactate dehydrogenase; part of the gene cluster that mediates the biosynthesis of KK-1, a novel cyclic depsipeptide with 10 residues which is a promising active compound with high activity against many plant pathogens, especially Botrytis cinerea (PubMed:29686660, PubMed:37746209). Within the pathway, kk1H catalyzes in the synthesis of D-lactic acid from pyruvic acid, which is recognized by the A domain of the first kk1B module (Probable). The nonribosomal peptide synthetase (NRPS) kk1B catalyzes the elongation and cyclization of the decapeptide chain composed of 1 D-lactic acid residue (D-Lac), 1 pipecolic acid residue (Pip), 1 aspartic acid residue (Asp), 1 isoleucine residue (Ile), 1 glycine residue (Gly), 1 tyrosine residue (Tyr) and 4 valine residues (Val). The Asp, Ile and 3 Val residues are N-methylated by the 5 methyltransferase domains from the NRPS (found in modules 3, 5, 6, 7 and 9), whereas the Tyr residue is O-methylated by the cluster encoded O-methyltransferase kk1A. The thioesterase kk1J is likely to be involved in the corrective mechanism of peptide chain synthesis. The D-lactate dehydrogenase kk1H is involved in the synthesis of D-lactic acid from pyruvic acid, which is recognized by the A domain of the first kk1B module. The pyrroline-5-carboxylate reductase kk1I is involved in the synthesis of the L-pipecolic acid residue of KK-1 from delta-1-pyrroline-5-carboxylate (P5C), a metabolic intermediate of lysine. It still is unclear how kk1C and kk1D are involved in the production of KK-1 (Probable).</text>
</comment>
<comment type="pathway">
    <text evidence="3 4">Secondary metabolite biosynthesis.</text>
</comment>
<comment type="induction">
    <text evidence="4">Expression is positively regulated by the KK-1 cluster-specific transcription factor kk1F.</text>
</comment>
<comment type="disruption phenotype">
    <text evidence="4">Abolishes completely the production of KK-1.</text>
</comment>
<comment type="similarity">
    <text evidence="7">Belongs to the D-isomer specific 2-hydroxyacid dehydrogenase family.</text>
</comment>
<keyword id="KW-0045">Antibiotic biosynthesis</keyword>
<keyword id="KW-0520">NAD</keyword>
<keyword id="KW-0560">Oxidoreductase</keyword>
<sequence>MKLTVFSAKPYDIEYLGGIATNQNSSPAIEINFLHVPLSSETAAFANGADAVCVFVHDVLDANVLRELYAAGVRAILFRCSGYNNIDLREAERLGFFVANVPSYSPEAVAEFAVALIQTLNRKTHRAYNRVRDGNFNLDGLLGRTLHGKTVGIVGSGRIGLAMAQIVQGFGCKLLAYDPRPTEAFKKYGEYVDLDTLLSQCDIVSLHCPLMDSTQHIINDTTVSKMKRGAMLVNTSRGGLIDTQSVMKALKSKRLGGLALDVYEGERALFYKDHSGDIIHDDLLMRLTTFHNVVVSGHQAYFTEEALTEIAECTLRNLDDWAKGVPTANALVQGRNSNGRRERGLARL</sequence>